<name>SYK_CITK8</name>
<evidence type="ECO:0000255" key="1">
    <source>
        <dbReference type="HAMAP-Rule" id="MF_00252"/>
    </source>
</evidence>
<accession>A8AP96</accession>
<protein>
    <recommendedName>
        <fullName evidence="1">Lysine--tRNA ligase</fullName>
        <ecNumber evidence="1">6.1.1.6</ecNumber>
    </recommendedName>
    <alternativeName>
        <fullName evidence="1">Lysyl-tRNA synthetase</fullName>
        <shortName evidence="1">LysRS</shortName>
    </alternativeName>
</protein>
<organism>
    <name type="scientific">Citrobacter koseri (strain ATCC BAA-895 / CDC 4225-83 / SGSC4696)</name>
    <dbReference type="NCBI Taxonomy" id="290338"/>
    <lineage>
        <taxon>Bacteria</taxon>
        <taxon>Pseudomonadati</taxon>
        <taxon>Pseudomonadota</taxon>
        <taxon>Gammaproteobacteria</taxon>
        <taxon>Enterobacterales</taxon>
        <taxon>Enterobacteriaceae</taxon>
        <taxon>Citrobacter</taxon>
    </lineage>
</organism>
<proteinExistence type="inferred from homology"/>
<sequence>MSEQHAQGADAVTDLNNELKTRREKLASLREQGIPFPNDFRRDHTSDQLHADFDAKENEELEALNIEVSVAGRMMTRRIMGKASFVTLQDVGGRIQLYVARDDLPEGVYNEQFKKWDLGDILGAKGKLFKTKTGELSIHCTELRLLTKALRPLPDKFHGLQDQEARYRQRYLDLISNDESRNTFKVRSQIMAGIRQFMVGRGFMEVETPMMQVIPGGAAARPFITHHNALDLDMYLRIAPELYLKRLVVGGFERVFEINRNFRNEGISVRHNPEFTMMELYMAYADYKDLIELTESLFRTLAQDILGKTEVPYGDEVFDFGKPFEKLTMREAIKKYRPETDMADLDNFDSAKAIAESIGIKVEKSWGLGRIVTEIFEEVAEAHLIQPTFITEYPAEVSPLARRNDVNPEITDRFEFFIGGREIGNGFSELNDAEDQAQRFQDQVNAKEAGDDEAMFYDEDYVTALEHGLPPTAGLGIGIDRMVMLFTNSHTIRDVILFPAMRPVK</sequence>
<dbReference type="EC" id="6.1.1.6" evidence="1"/>
<dbReference type="EMBL" id="CP000822">
    <property type="protein sequence ID" value="ABV15309.1"/>
    <property type="molecule type" value="Genomic_DNA"/>
</dbReference>
<dbReference type="RefSeq" id="WP_012134993.1">
    <property type="nucleotide sequence ID" value="NC_009792.1"/>
</dbReference>
<dbReference type="SMR" id="A8AP96"/>
<dbReference type="STRING" id="290338.CKO_04251"/>
<dbReference type="GeneID" id="45137855"/>
<dbReference type="KEGG" id="cko:CKO_04251"/>
<dbReference type="HOGENOM" id="CLU_008255_6_0_6"/>
<dbReference type="OrthoDB" id="9801152at2"/>
<dbReference type="Proteomes" id="UP000008148">
    <property type="component" value="Chromosome"/>
</dbReference>
<dbReference type="GO" id="GO:0005829">
    <property type="term" value="C:cytosol"/>
    <property type="evidence" value="ECO:0007669"/>
    <property type="project" value="TreeGrafter"/>
</dbReference>
<dbReference type="GO" id="GO:0005524">
    <property type="term" value="F:ATP binding"/>
    <property type="evidence" value="ECO:0007669"/>
    <property type="project" value="UniProtKB-UniRule"/>
</dbReference>
<dbReference type="GO" id="GO:0004824">
    <property type="term" value="F:lysine-tRNA ligase activity"/>
    <property type="evidence" value="ECO:0007669"/>
    <property type="project" value="UniProtKB-UniRule"/>
</dbReference>
<dbReference type="GO" id="GO:0000287">
    <property type="term" value="F:magnesium ion binding"/>
    <property type="evidence" value="ECO:0007669"/>
    <property type="project" value="UniProtKB-UniRule"/>
</dbReference>
<dbReference type="GO" id="GO:0000049">
    <property type="term" value="F:tRNA binding"/>
    <property type="evidence" value="ECO:0007669"/>
    <property type="project" value="TreeGrafter"/>
</dbReference>
<dbReference type="GO" id="GO:0006430">
    <property type="term" value="P:lysyl-tRNA aminoacylation"/>
    <property type="evidence" value="ECO:0007669"/>
    <property type="project" value="UniProtKB-UniRule"/>
</dbReference>
<dbReference type="CDD" id="cd00775">
    <property type="entry name" value="LysRS_core"/>
    <property type="match status" value="1"/>
</dbReference>
<dbReference type="CDD" id="cd04322">
    <property type="entry name" value="LysRS_N"/>
    <property type="match status" value="1"/>
</dbReference>
<dbReference type="FunFam" id="2.40.50.140:FF:000024">
    <property type="entry name" value="Lysine--tRNA ligase"/>
    <property type="match status" value="1"/>
</dbReference>
<dbReference type="FunFam" id="3.30.930.10:FF:000001">
    <property type="entry name" value="Lysine--tRNA ligase"/>
    <property type="match status" value="1"/>
</dbReference>
<dbReference type="Gene3D" id="3.30.930.10">
    <property type="entry name" value="Bira Bifunctional Protein, Domain 2"/>
    <property type="match status" value="1"/>
</dbReference>
<dbReference type="Gene3D" id="2.40.50.140">
    <property type="entry name" value="Nucleic acid-binding proteins"/>
    <property type="match status" value="1"/>
</dbReference>
<dbReference type="HAMAP" id="MF_00252">
    <property type="entry name" value="Lys_tRNA_synth_class2"/>
    <property type="match status" value="1"/>
</dbReference>
<dbReference type="InterPro" id="IPR004364">
    <property type="entry name" value="Aa-tRNA-synt_II"/>
</dbReference>
<dbReference type="InterPro" id="IPR006195">
    <property type="entry name" value="aa-tRNA-synth_II"/>
</dbReference>
<dbReference type="InterPro" id="IPR045864">
    <property type="entry name" value="aa-tRNA-synth_II/BPL/LPL"/>
</dbReference>
<dbReference type="InterPro" id="IPR002313">
    <property type="entry name" value="Lys-tRNA-ligase_II"/>
</dbReference>
<dbReference type="InterPro" id="IPR034762">
    <property type="entry name" value="Lys-tRNA-ligase_II_bac/euk"/>
</dbReference>
<dbReference type="InterPro" id="IPR044136">
    <property type="entry name" value="Lys-tRNA-ligase_II_N"/>
</dbReference>
<dbReference type="InterPro" id="IPR018149">
    <property type="entry name" value="Lys-tRNA-synth_II_C"/>
</dbReference>
<dbReference type="InterPro" id="IPR012340">
    <property type="entry name" value="NA-bd_OB-fold"/>
</dbReference>
<dbReference type="InterPro" id="IPR004365">
    <property type="entry name" value="NA-bd_OB_tRNA"/>
</dbReference>
<dbReference type="NCBIfam" id="TIGR00499">
    <property type="entry name" value="lysS_bact"/>
    <property type="match status" value="1"/>
</dbReference>
<dbReference type="NCBIfam" id="NF001756">
    <property type="entry name" value="PRK00484.1"/>
    <property type="match status" value="1"/>
</dbReference>
<dbReference type="NCBIfam" id="NF009101">
    <property type="entry name" value="PRK12445.1"/>
    <property type="match status" value="1"/>
</dbReference>
<dbReference type="PANTHER" id="PTHR42918:SF15">
    <property type="entry name" value="LYSINE--TRNA LIGASE, CHLOROPLASTIC_MITOCHONDRIAL"/>
    <property type="match status" value="1"/>
</dbReference>
<dbReference type="PANTHER" id="PTHR42918">
    <property type="entry name" value="LYSYL-TRNA SYNTHETASE"/>
    <property type="match status" value="1"/>
</dbReference>
<dbReference type="Pfam" id="PF00152">
    <property type="entry name" value="tRNA-synt_2"/>
    <property type="match status" value="1"/>
</dbReference>
<dbReference type="Pfam" id="PF01336">
    <property type="entry name" value="tRNA_anti-codon"/>
    <property type="match status" value="1"/>
</dbReference>
<dbReference type="PIRSF" id="PIRSF039101">
    <property type="entry name" value="LysRS2"/>
    <property type="match status" value="1"/>
</dbReference>
<dbReference type="PRINTS" id="PR00982">
    <property type="entry name" value="TRNASYNTHLYS"/>
</dbReference>
<dbReference type="SUPFAM" id="SSF55681">
    <property type="entry name" value="Class II aaRS and biotin synthetases"/>
    <property type="match status" value="1"/>
</dbReference>
<dbReference type="SUPFAM" id="SSF50249">
    <property type="entry name" value="Nucleic acid-binding proteins"/>
    <property type="match status" value="1"/>
</dbReference>
<dbReference type="PROSITE" id="PS50862">
    <property type="entry name" value="AA_TRNA_LIGASE_II"/>
    <property type="match status" value="1"/>
</dbReference>
<keyword id="KW-0030">Aminoacyl-tRNA synthetase</keyword>
<keyword id="KW-0067">ATP-binding</keyword>
<keyword id="KW-0963">Cytoplasm</keyword>
<keyword id="KW-0436">Ligase</keyword>
<keyword id="KW-0460">Magnesium</keyword>
<keyword id="KW-0479">Metal-binding</keyword>
<keyword id="KW-0547">Nucleotide-binding</keyword>
<keyword id="KW-0648">Protein biosynthesis</keyword>
<keyword id="KW-1185">Reference proteome</keyword>
<reference key="1">
    <citation type="submission" date="2007-08" db="EMBL/GenBank/DDBJ databases">
        <authorList>
            <consortium name="The Citrobacter koseri Genome Sequencing Project"/>
            <person name="McClelland M."/>
            <person name="Sanderson E.K."/>
            <person name="Porwollik S."/>
            <person name="Spieth J."/>
            <person name="Clifton W.S."/>
            <person name="Latreille P."/>
            <person name="Courtney L."/>
            <person name="Wang C."/>
            <person name="Pepin K."/>
            <person name="Bhonagiri V."/>
            <person name="Nash W."/>
            <person name="Johnson M."/>
            <person name="Thiruvilangam P."/>
            <person name="Wilson R."/>
        </authorList>
    </citation>
    <scope>NUCLEOTIDE SEQUENCE [LARGE SCALE GENOMIC DNA]</scope>
    <source>
        <strain>ATCC BAA-895 / CDC 4225-83 / SGSC4696</strain>
    </source>
</reference>
<gene>
    <name evidence="1" type="primary">lysS</name>
    <name type="ordered locus">CKO_04251</name>
</gene>
<feature type="chain" id="PRO_1000012870" description="Lysine--tRNA ligase">
    <location>
        <begin position="1"/>
        <end position="505"/>
    </location>
</feature>
<feature type="binding site" evidence="1">
    <location>
        <position position="415"/>
    </location>
    <ligand>
        <name>Mg(2+)</name>
        <dbReference type="ChEBI" id="CHEBI:18420"/>
        <label>1</label>
    </ligand>
</feature>
<feature type="binding site" evidence="1">
    <location>
        <position position="422"/>
    </location>
    <ligand>
        <name>Mg(2+)</name>
        <dbReference type="ChEBI" id="CHEBI:18420"/>
        <label>1</label>
    </ligand>
</feature>
<feature type="binding site" evidence="1">
    <location>
        <position position="422"/>
    </location>
    <ligand>
        <name>Mg(2+)</name>
        <dbReference type="ChEBI" id="CHEBI:18420"/>
        <label>2</label>
    </ligand>
</feature>
<comment type="catalytic activity">
    <reaction evidence="1">
        <text>tRNA(Lys) + L-lysine + ATP = L-lysyl-tRNA(Lys) + AMP + diphosphate</text>
        <dbReference type="Rhea" id="RHEA:20792"/>
        <dbReference type="Rhea" id="RHEA-COMP:9696"/>
        <dbReference type="Rhea" id="RHEA-COMP:9697"/>
        <dbReference type="ChEBI" id="CHEBI:30616"/>
        <dbReference type="ChEBI" id="CHEBI:32551"/>
        <dbReference type="ChEBI" id="CHEBI:33019"/>
        <dbReference type="ChEBI" id="CHEBI:78442"/>
        <dbReference type="ChEBI" id="CHEBI:78529"/>
        <dbReference type="ChEBI" id="CHEBI:456215"/>
        <dbReference type="EC" id="6.1.1.6"/>
    </reaction>
</comment>
<comment type="cofactor">
    <cofactor evidence="1">
        <name>Mg(2+)</name>
        <dbReference type="ChEBI" id="CHEBI:18420"/>
    </cofactor>
    <text evidence="1">Binds 3 Mg(2+) ions per subunit.</text>
</comment>
<comment type="subunit">
    <text evidence="1">Homodimer.</text>
</comment>
<comment type="subcellular location">
    <subcellularLocation>
        <location evidence="1">Cytoplasm</location>
    </subcellularLocation>
</comment>
<comment type="similarity">
    <text evidence="1">Belongs to the class-II aminoacyl-tRNA synthetase family.</text>
</comment>